<reference key="1">
    <citation type="journal article" date="2009" name="PLoS Genet.">
        <title>The complete genome and proteome of Laribacter hongkongensis reveal potential mechanisms for adaptations to different temperatures and habitats.</title>
        <authorList>
            <person name="Woo P.C.Y."/>
            <person name="Lau S.K.P."/>
            <person name="Tse H."/>
            <person name="Teng J.L.L."/>
            <person name="Curreem S.O."/>
            <person name="Tsang A.K.L."/>
            <person name="Fan R.Y.Y."/>
            <person name="Wong G.K.M."/>
            <person name="Huang Y."/>
            <person name="Loman N.J."/>
            <person name="Snyder L.A.S."/>
            <person name="Cai J.J."/>
            <person name="Huang J.-D."/>
            <person name="Mak W."/>
            <person name="Pallen M.J."/>
            <person name="Lok S."/>
            <person name="Yuen K.-Y."/>
        </authorList>
    </citation>
    <scope>NUCLEOTIDE SEQUENCE [LARGE SCALE GENOMIC DNA]</scope>
    <source>
        <strain>HLHK9</strain>
    </source>
</reference>
<gene>
    <name evidence="1" type="primary">gatB</name>
    <name type="ordered locus">LHK_03067</name>
</gene>
<organism>
    <name type="scientific">Laribacter hongkongensis (strain HLHK9)</name>
    <dbReference type="NCBI Taxonomy" id="557598"/>
    <lineage>
        <taxon>Bacteria</taxon>
        <taxon>Pseudomonadati</taxon>
        <taxon>Pseudomonadota</taxon>
        <taxon>Betaproteobacteria</taxon>
        <taxon>Neisseriales</taxon>
        <taxon>Aquaspirillaceae</taxon>
        <taxon>Laribacter</taxon>
    </lineage>
</organism>
<dbReference type="EC" id="6.3.5.-" evidence="1"/>
<dbReference type="EMBL" id="CP001154">
    <property type="protein sequence ID" value="ACO76045.1"/>
    <property type="molecule type" value="Genomic_DNA"/>
</dbReference>
<dbReference type="RefSeq" id="WP_012698508.1">
    <property type="nucleotide sequence ID" value="NC_012559.1"/>
</dbReference>
<dbReference type="SMR" id="C1D5M8"/>
<dbReference type="STRING" id="557598.LHK_03067"/>
<dbReference type="GeneID" id="75108273"/>
<dbReference type="KEGG" id="lhk:LHK_03067"/>
<dbReference type="eggNOG" id="COG0064">
    <property type="taxonomic scope" value="Bacteria"/>
</dbReference>
<dbReference type="HOGENOM" id="CLU_019240_0_0_4"/>
<dbReference type="Proteomes" id="UP000002010">
    <property type="component" value="Chromosome"/>
</dbReference>
<dbReference type="GO" id="GO:0050566">
    <property type="term" value="F:asparaginyl-tRNA synthase (glutamine-hydrolyzing) activity"/>
    <property type="evidence" value="ECO:0007669"/>
    <property type="project" value="RHEA"/>
</dbReference>
<dbReference type="GO" id="GO:0005524">
    <property type="term" value="F:ATP binding"/>
    <property type="evidence" value="ECO:0007669"/>
    <property type="project" value="UniProtKB-KW"/>
</dbReference>
<dbReference type="GO" id="GO:0050567">
    <property type="term" value="F:glutaminyl-tRNA synthase (glutamine-hydrolyzing) activity"/>
    <property type="evidence" value="ECO:0007669"/>
    <property type="project" value="UniProtKB-UniRule"/>
</dbReference>
<dbReference type="GO" id="GO:0070681">
    <property type="term" value="P:glutaminyl-tRNAGln biosynthesis via transamidation"/>
    <property type="evidence" value="ECO:0007669"/>
    <property type="project" value="TreeGrafter"/>
</dbReference>
<dbReference type="GO" id="GO:0006412">
    <property type="term" value="P:translation"/>
    <property type="evidence" value="ECO:0007669"/>
    <property type="project" value="UniProtKB-UniRule"/>
</dbReference>
<dbReference type="FunFam" id="1.10.10.410:FF:000001">
    <property type="entry name" value="Aspartyl/glutamyl-tRNA(Asn/Gln) amidotransferase subunit B"/>
    <property type="match status" value="1"/>
</dbReference>
<dbReference type="Gene3D" id="1.10.10.410">
    <property type="match status" value="1"/>
</dbReference>
<dbReference type="Gene3D" id="1.10.150.380">
    <property type="entry name" value="GatB domain, N-terminal subdomain"/>
    <property type="match status" value="1"/>
</dbReference>
<dbReference type="HAMAP" id="MF_00121">
    <property type="entry name" value="GatB"/>
    <property type="match status" value="1"/>
</dbReference>
<dbReference type="InterPro" id="IPR017959">
    <property type="entry name" value="Asn/Gln-tRNA_amidoTrfase_suB/E"/>
</dbReference>
<dbReference type="InterPro" id="IPR006075">
    <property type="entry name" value="Asn/Gln-tRNA_Trfase_suB/E_cat"/>
</dbReference>
<dbReference type="InterPro" id="IPR018027">
    <property type="entry name" value="Asn/Gln_amidotransferase"/>
</dbReference>
<dbReference type="InterPro" id="IPR003789">
    <property type="entry name" value="Asn/Gln_tRNA_amidoTrase-B-like"/>
</dbReference>
<dbReference type="InterPro" id="IPR004413">
    <property type="entry name" value="GatB"/>
</dbReference>
<dbReference type="InterPro" id="IPR042114">
    <property type="entry name" value="GatB_C_1"/>
</dbReference>
<dbReference type="InterPro" id="IPR023168">
    <property type="entry name" value="GatB_Yqey_C_2"/>
</dbReference>
<dbReference type="InterPro" id="IPR017958">
    <property type="entry name" value="Gln-tRNA_amidoTrfase_suB_CS"/>
</dbReference>
<dbReference type="InterPro" id="IPR014746">
    <property type="entry name" value="Gln_synth/guanido_kin_cat_dom"/>
</dbReference>
<dbReference type="NCBIfam" id="TIGR00133">
    <property type="entry name" value="gatB"/>
    <property type="match status" value="1"/>
</dbReference>
<dbReference type="NCBIfam" id="NF004012">
    <property type="entry name" value="PRK05477.1-2"/>
    <property type="match status" value="1"/>
</dbReference>
<dbReference type="NCBIfam" id="NF004014">
    <property type="entry name" value="PRK05477.1-4"/>
    <property type="match status" value="1"/>
</dbReference>
<dbReference type="NCBIfam" id="NF004015">
    <property type="entry name" value="PRK05477.1-5"/>
    <property type="match status" value="1"/>
</dbReference>
<dbReference type="PANTHER" id="PTHR11659">
    <property type="entry name" value="GLUTAMYL-TRNA GLN AMIDOTRANSFERASE SUBUNIT B MITOCHONDRIAL AND PROKARYOTIC PET112-RELATED"/>
    <property type="match status" value="1"/>
</dbReference>
<dbReference type="PANTHER" id="PTHR11659:SF0">
    <property type="entry name" value="GLUTAMYL-TRNA(GLN) AMIDOTRANSFERASE SUBUNIT B, MITOCHONDRIAL"/>
    <property type="match status" value="1"/>
</dbReference>
<dbReference type="Pfam" id="PF02934">
    <property type="entry name" value="GatB_N"/>
    <property type="match status" value="1"/>
</dbReference>
<dbReference type="Pfam" id="PF02637">
    <property type="entry name" value="GatB_Yqey"/>
    <property type="match status" value="1"/>
</dbReference>
<dbReference type="SMART" id="SM00845">
    <property type="entry name" value="GatB_Yqey"/>
    <property type="match status" value="1"/>
</dbReference>
<dbReference type="SUPFAM" id="SSF89095">
    <property type="entry name" value="GatB/YqeY motif"/>
    <property type="match status" value="1"/>
</dbReference>
<dbReference type="SUPFAM" id="SSF55931">
    <property type="entry name" value="Glutamine synthetase/guanido kinase"/>
    <property type="match status" value="1"/>
</dbReference>
<dbReference type="PROSITE" id="PS01234">
    <property type="entry name" value="GATB"/>
    <property type="match status" value="1"/>
</dbReference>
<proteinExistence type="inferred from homology"/>
<feature type="chain" id="PRO_1000122520" description="Aspartyl/glutamyl-tRNA(Asn/Gln) amidotransferase subunit B">
    <location>
        <begin position="1"/>
        <end position="476"/>
    </location>
</feature>
<protein>
    <recommendedName>
        <fullName evidence="1">Aspartyl/glutamyl-tRNA(Asn/Gln) amidotransferase subunit B</fullName>
        <shortName evidence="1">Asp/Glu-ADT subunit B</shortName>
        <ecNumber evidence="1">6.3.5.-</ecNumber>
    </recommendedName>
</protein>
<comment type="function">
    <text evidence="1">Allows the formation of correctly charged Asn-tRNA(Asn) or Gln-tRNA(Gln) through the transamidation of misacylated Asp-tRNA(Asn) or Glu-tRNA(Gln) in organisms which lack either or both of asparaginyl-tRNA or glutaminyl-tRNA synthetases. The reaction takes place in the presence of glutamine and ATP through an activated phospho-Asp-tRNA(Asn) or phospho-Glu-tRNA(Gln).</text>
</comment>
<comment type="catalytic activity">
    <reaction evidence="1">
        <text>L-glutamyl-tRNA(Gln) + L-glutamine + ATP + H2O = L-glutaminyl-tRNA(Gln) + L-glutamate + ADP + phosphate + H(+)</text>
        <dbReference type="Rhea" id="RHEA:17521"/>
        <dbReference type="Rhea" id="RHEA-COMP:9681"/>
        <dbReference type="Rhea" id="RHEA-COMP:9684"/>
        <dbReference type="ChEBI" id="CHEBI:15377"/>
        <dbReference type="ChEBI" id="CHEBI:15378"/>
        <dbReference type="ChEBI" id="CHEBI:29985"/>
        <dbReference type="ChEBI" id="CHEBI:30616"/>
        <dbReference type="ChEBI" id="CHEBI:43474"/>
        <dbReference type="ChEBI" id="CHEBI:58359"/>
        <dbReference type="ChEBI" id="CHEBI:78520"/>
        <dbReference type="ChEBI" id="CHEBI:78521"/>
        <dbReference type="ChEBI" id="CHEBI:456216"/>
    </reaction>
</comment>
<comment type="catalytic activity">
    <reaction evidence="1">
        <text>L-aspartyl-tRNA(Asn) + L-glutamine + ATP + H2O = L-asparaginyl-tRNA(Asn) + L-glutamate + ADP + phosphate + 2 H(+)</text>
        <dbReference type="Rhea" id="RHEA:14513"/>
        <dbReference type="Rhea" id="RHEA-COMP:9674"/>
        <dbReference type="Rhea" id="RHEA-COMP:9677"/>
        <dbReference type="ChEBI" id="CHEBI:15377"/>
        <dbReference type="ChEBI" id="CHEBI:15378"/>
        <dbReference type="ChEBI" id="CHEBI:29985"/>
        <dbReference type="ChEBI" id="CHEBI:30616"/>
        <dbReference type="ChEBI" id="CHEBI:43474"/>
        <dbReference type="ChEBI" id="CHEBI:58359"/>
        <dbReference type="ChEBI" id="CHEBI:78515"/>
        <dbReference type="ChEBI" id="CHEBI:78516"/>
        <dbReference type="ChEBI" id="CHEBI:456216"/>
    </reaction>
</comment>
<comment type="subunit">
    <text evidence="1">Heterotrimer of A, B and C subunits.</text>
</comment>
<comment type="similarity">
    <text evidence="1">Belongs to the GatB/GatE family. GatB subfamily.</text>
</comment>
<sequence length="476" mass="51510">MKWEVVIGLEVHAQLSTQSKIFSGASTAFGAAPNTQACAVDIALPGVLPVMNRVAMEKAVRFGLAIGATVNPVSIFARKNYFYPDLPKGYQISQFEKPIVEGGQIAIRVGETERRINLTRAHLEEDAGKSLHEEFEGSTGIDLNRAGTPLLEIVSEPEMRSAAEAVAYARALHGLVTWLGICDGNMQEGSFRVDANVSVRPEGQAEFGTRREIKNLNSFRFLEQAINYEVQWQIDLIEDGGKVQQATVLFDPATGETRAMRSKEDAHDYRYFPDPDLLPLTVTEADFAAVRADMPELPGEMAARFVESFGVPELDAAQLTQSLDVARYFEAAAAASGQGKLAANWITGELAARLNREDMALAACPIAPERLAGLLVRIADNTVSSKLARQVFDALWDSELSADAVIERDGLKQVSDAGAIEKLVDDAIAGNPKAVEEFRAGKEKALNALAGQVMKASKGKANPAQVQDILRQKLAG</sequence>
<name>GATB_LARHH</name>
<accession>C1D5M8</accession>
<keyword id="KW-0067">ATP-binding</keyword>
<keyword id="KW-0436">Ligase</keyword>
<keyword id="KW-0547">Nucleotide-binding</keyword>
<keyword id="KW-0648">Protein biosynthesis</keyword>
<keyword id="KW-1185">Reference proteome</keyword>
<evidence type="ECO:0000255" key="1">
    <source>
        <dbReference type="HAMAP-Rule" id="MF_00121"/>
    </source>
</evidence>